<sequence>MILGLALIPSKSFQEAVDSYRKRYDKQYSRIKPHVTIKAPFEIEDGDLDSVIEQVRARINGIPAVEVHATKASSFKPTNNVIYFKVAKTDDLEELFNRFNGEDFYGEAEHVFVPHFTIAQGLSSQEFEDIFGQVALAGVDHKEIIDELTLLRFDDDEDKWKVIETFKLA</sequence>
<proteinExistence type="inferred from homology"/>
<organism>
    <name type="scientific">Staphylococcus aureus (strain bovine RF122 / ET3-1)</name>
    <dbReference type="NCBI Taxonomy" id="273036"/>
    <lineage>
        <taxon>Bacteria</taxon>
        <taxon>Bacillati</taxon>
        <taxon>Bacillota</taxon>
        <taxon>Bacilli</taxon>
        <taxon>Bacillales</taxon>
        <taxon>Staphylococcaceae</taxon>
        <taxon>Staphylococcus</taxon>
    </lineage>
</organism>
<accession>Q2YWW8</accession>
<comment type="similarity">
    <text evidence="1">Belongs to the 2H phosphoesterase superfamily. YjcG family.</text>
</comment>
<name>Y881_STAAB</name>
<keyword id="KW-0378">Hydrolase</keyword>
<gene>
    <name type="ordered locus">SAB0881</name>
</gene>
<feature type="chain" id="PRO_0000299337" description="Putative phosphoesterase SAB0881">
    <location>
        <begin position="1"/>
        <end position="169"/>
    </location>
</feature>
<feature type="short sequence motif" description="HXTX 1" evidence="1">
    <location>
        <begin position="34"/>
        <end position="37"/>
    </location>
</feature>
<feature type="short sequence motif" description="HXTX 2" evidence="1">
    <location>
        <begin position="115"/>
        <end position="118"/>
    </location>
</feature>
<feature type="active site" description="Proton donor" evidence="1">
    <location>
        <position position="34"/>
    </location>
</feature>
<feature type="active site" description="Proton acceptor" evidence="1">
    <location>
        <position position="115"/>
    </location>
</feature>
<dbReference type="EC" id="3.1.-.-" evidence="1"/>
<dbReference type="EMBL" id="AJ938182">
    <property type="protein sequence ID" value="CAI80569.1"/>
    <property type="molecule type" value="Genomic_DNA"/>
</dbReference>
<dbReference type="RefSeq" id="WP_000600387.1">
    <property type="nucleotide sequence ID" value="NC_007622.1"/>
</dbReference>
<dbReference type="SMR" id="Q2YWW8"/>
<dbReference type="KEGG" id="sab:SAB0881"/>
<dbReference type="HOGENOM" id="CLU_132020_0_0_9"/>
<dbReference type="GO" id="GO:0016788">
    <property type="term" value="F:hydrolase activity, acting on ester bonds"/>
    <property type="evidence" value="ECO:0007669"/>
    <property type="project" value="UniProtKB-UniRule"/>
</dbReference>
<dbReference type="Gene3D" id="3.90.1140.10">
    <property type="entry name" value="Cyclic phosphodiesterase"/>
    <property type="match status" value="1"/>
</dbReference>
<dbReference type="HAMAP" id="MF_01444">
    <property type="entry name" value="2H_phosphoesterase_YjcG"/>
    <property type="match status" value="1"/>
</dbReference>
<dbReference type="InterPro" id="IPR050580">
    <property type="entry name" value="2H_phosphoesterase_YjcG-like"/>
</dbReference>
<dbReference type="InterPro" id="IPR009097">
    <property type="entry name" value="Cyclic_Pdiesterase"/>
</dbReference>
<dbReference type="InterPro" id="IPR022932">
    <property type="entry name" value="YjcG"/>
</dbReference>
<dbReference type="NCBIfam" id="NF010223">
    <property type="entry name" value="PRK13679.1"/>
    <property type="match status" value="1"/>
</dbReference>
<dbReference type="PANTHER" id="PTHR40037:SF1">
    <property type="entry name" value="PHOSPHOESTERASE SAOUHSC_00951-RELATED"/>
    <property type="match status" value="1"/>
</dbReference>
<dbReference type="PANTHER" id="PTHR40037">
    <property type="entry name" value="PHOSPHOESTERASE YJCG-RELATED"/>
    <property type="match status" value="1"/>
</dbReference>
<dbReference type="Pfam" id="PF13563">
    <property type="entry name" value="2_5_RNA_ligase2"/>
    <property type="match status" value="1"/>
</dbReference>
<dbReference type="SUPFAM" id="SSF55144">
    <property type="entry name" value="LigT-like"/>
    <property type="match status" value="1"/>
</dbReference>
<evidence type="ECO:0000255" key="1">
    <source>
        <dbReference type="HAMAP-Rule" id="MF_01444"/>
    </source>
</evidence>
<reference key="1">
    <citation type="journal article" date="2007" name="PLoS ONE">
        <title>Molecular correlates of host specialization in Staphylococcus aureus.</title>
        <authorList>
            <person name="Herron-Olson L."/>
            <person name="Fitzgerald J.R."/>
            <person name="Musser J.M."/>
            <person name="Kapur V."/>
        </authorList>
    </citation>
    <scope>NUCLEOTIDE SEQUENCE [LARGE SCALE GENOMIC DNA]</scope>
    <source>
        <strain>bovine RF122 / ET3-1</strain>
    </source>
</reference>
<protein>
    <recommendedName>
        <fullName evidence="1">Putative phosphoesterase SAB0881</fullName>
        <ecNumber evidence="1">3.1.-.-</ecNumber>
    </recommendedName>
</protein>